<sequence length="92" mass="11011">MATTLEEFSAKLDRLDAEFAKKMEEQNKKFFADKPDESTLSPEMKEHYEKFEKMIQEHTDKFNKKMHEHSEHFKAKFAELLEQQKNAQFPGK</sequence>
<dbReference type="EMBL" id="AJ000077">
    <property type="protein sequence ID" value="CAA03901.1"/>
    <property type="molecule type" value="mRNA"/>
</dbReference>
<dbReference type="EMBL" id="AF167435">
    <property type="protein sequence ID" value="AAF04809.1"/>
    <property type="molecule type" value="Genomic_DNA"/>
</dbReference>
<dbReference type="EMBL" id="AF167436">
    <property type="protein sequence ID" value="AAF04810.1"/>
    <property type="molecule type" value="Genomic_DNA"/>
</dbReference>
<dbReference type="RefSeq" id="XP_810488.1">
    <property type="nucleotide sequence ID" value="XM_805395.1"/>
</dbReference>
<dbReference type="SMR" id="Q9U6Z1"/>
<dbReference type="KEGG" id="tcr:508413.68"/>
<dbReference type="KEGG" id="tcr:508413.76"/>
<dbReference type="KEGG" id="tcr:510755.89"/>
<dbReference type="KEGG" id="tcr:510755.98"/>
<dbReference type="VEuPathDB" id="TriTrypDB:BCY84_13933"/>
<dbReference type="VEuPathDB" id="TriTrypDB:C3747_1g318c"/>
<dbReference type="VEuPathDB" id="TriTrypDB:C3747_1g319c"/>
<dbReference type="VEuPathDB" id="TriTrypDB:C3747_268g105c"/>
<dbReference type="VEuPathDB" id="TriTrypDB:C4B63_2g166c"/>
<dbReference type="VEuPathDB" id="TriTrypDB:TcBrA4_0063250"/>
<dbReference type="VEuPathDB" id="TriTrypDB:TcCLB.508413.76"/>
<dbReference type="VEuPathDB" id="TriTrypDB:TcCLB.510755.89"/>
<dbReference type="VEuPathDB" id="TriTrypDB:TCDM_03377"/>
<dbReference type="VEuPathDB" id="TriTrypDB:TcG_02054"/>
<dbReference type="VEuPathDB" id="TriTrypDB:TcYC6_0068230"/>
<dbReference type="OMA" id="HFKHKFA"/>
<dbReference type="OrthoDB" id="274755at2759"/>
<dbReference type="GO" id="GO:0005737">
    <property type="term" value="C:cytoplasm"/>
    <property type="evidence" value="ECO:0007669"/>
    <property type="project" value="UniProtKB-KW"/>
</dbReference>
<dbReference type="GO" id="GO:0005874">
    <property type="term" value="C:microtubule"/>
    <property type="evidence" value="ECO:0007669"/>
    <property type="project" value="UniProtKB-KW"/>
</dbReference>
<dbReference type="GO" id="GO:0015630">
    <property type="term" value="C:microtubule cytoskeleton"/>
    <property type="evidence" value="ECO:0000314"/>
    <property type="project" value="UniProtKB"/>
</dbReference>
<dbReference type="GO" id="GO:0060285">
    <property type="term" value="P:cilium-dependent cell motility"/>
    <property type="evidence" value="ECO:0000303"/>
    <property type="project" value="UniProtKB"/>
</dbReference>
<dbReference type="GO" id="GO:0007010">
    <property type="term" value="P:cytoskeleton organization"/>
    <property type="evidence" value="ECO:0000314"/>
    <property type="project" value="UniProtKB"/>
</dbReference>
<dbReference type="GO" id="GO:0006952">
    <property type="term" value="P:defense response"/>
    <property type="evidence" value="ECO:0007669"/>
    <property type="project" value="InterPro"/>
</dbReference>
<dbReference type="GO" id="GO:0008284">
    <property type="term" value="P:positive regulation of cell population proliferation"/>
    <property type="evidence" value="ECO:0007669"/>
    <property type="project" value="InterPro"/>
</dbReference>
<dbReference type="GO" id="GO:0044409">
    <property type="term" value="P:symbiont entry into host"/>
    <property type="evidence" value="ECO:0000303"/>
    <property type="project" value="UniProtKB"/>
</dbReference>
<dbReference type="InterPro" id="IPR004132">
    <property type="entry name" value="KMP11"/>
</dbReference>
<dbReference type="Pfam" id="PF03037">
    <property type="entry name" value="KMP11"/>
    <property type="match status" value="1"/>
</dbReference>
<dbReference type="SUPFAM" id="SSF69989">
    <property type="entry name" value="C-terminal domain of PLC-beta"/>
    <property type="match status" value="1"/>
</dbReference>
<feature type="chain" id="PRO_0000205717" description="Kinetoplastid membrane protein 11">
    <location>
        <begin position="1"/>
        <end position="92"/>
    </location>
</feature>
<feature type="sequence conflict" description="In Ref. 1; AAF04809." evidence="5" ref="1">
    <location>
        <position position="92"/>
    </location>
</feature>
<proteinExistence type="evidence at transcript level"/>
<comment type="function">
    <text evidence="3 4">May be involved in the regulation of the cytoskeleton through interaction with the subpellicular microtubules. May be involved in parasite mobility and attachment to the surface of the host cell. Behaves as a strong immunogen during infection.</text>
</comment>
<comment type="subunit">
    <text evidence="1">Monomer.</text>
</comment>
<comment type="subcellular location">
    <subcellularLocation>
        <location evidence="2">Cytoplasm</location>
        <location evidence="2">Cytoskeleton</location>
    </subcellularLocation>
    <text>Associated with microtubules.</text>
</comment>
<comment type="developmental stage">
    <text evidence="2">Abundantly expressed in amastigotes and trypomastigotes. In epimastigotes, KMP-11 is expressed at a high level during the logarithmic growth phase but is down-regulated during the stationary phase of growth.</text>
</comment>
<comment type="miscellaneous">
    <text evidence="2">There are four copies of the KMP-11 gene in T.cruzi.</text>
</comment>
<comment type="similarity">
    <text evidence="5">Belongs to the KMP-11 family.</text>
</comment>
<name>KM11_TRYCR</name>
<accession>Q9U6Z1</accession>
<accession>O21435</accession>
<accession>Q9U6Z0</accession>
<protein>
    <recommendedName>
        <fullName>Kinetoplastid membrane protein 11</fullName>
        <shortName>KMP-11</shortName>
    </recommendedName>
</protein>
<evidence type="ECO:0000250" key="1">
    <source>
        <dbReference type="UniProtKB" id="Q25297"/>
    </source>
</evidence>
<evidence type="ECO:0000269" key="2">
    <source>
    </source>
</evidence>
<evidence type="ECO:0000269" key="3">
    <source>
    </source>
</evidence>
<evidence type="ECO:0000303" key="4">
    <source>
    </source>
</evidence>
<evidence type="ECO:0000305" key="5"/>
<evidence type="ECO:0000312" key="6">
    <source>
        <dbReference type="EMBL" id="CAA03901.1"/>
    </source>
</evidence>
<reference evidence="5" key="1">
    <citation type="journal article" date="2000" name="DNA Cell Biol.">
        <title>Molecular characterization of KMP11 from Trypanosoma cruzi: a cytoskeleton-associated protein regulated at the translational level.</title>
        <authorList>
            <person name="Thomas M.C."/>
            <person name="Garcia-Perez J.L."/>
            <person name="Alonso C."/>
            <person name="Lopez M.C."/>
        </authorList>
    </citation>
    <scope>NUCLEOTIDE SEQUENCE</scope>
    <scope>SUBCELLULAR LOCATION</scope>
    <scope>DEVELOPMENTAL STAGE</scope>
    <source>
        <strain>Tulahuen</strain>
        <strain>Y</strain>
    </source>
</reference>
<reference evidence="5" key="2">
    <citation type="journal article" date="2001" name="Clin. Exp. Immunol.">
        <title>Mapping of the antigenic determinants of the T. cruzi kinetoplastid membrane protein-11. Identification of a linear epitope specifically recognized by human Chagasic sera.</title>
        <authorList>
            <person name="Thomas M.C."/>
            <person name="Longobardo M.V."/>
            <person name="Carmelo E."/>
            <person name="Maranon C."/>
            <person name="Planelles L."/>
            <person name="Patarroyo M.E."/>
            <person name="Alonso C."/>
            <person name="Lopez M.C."/>
        </authorList>
    </citation>
    <scope>FUNCTION</scope>
</reference>
<keyword id="KW-0963">Cytoplasm</keyword>
<keyword id="KW-0206">Cytoskeleton</keyword>
<keyword id="KW-0493">Microtubule</keyword>
<gene>
    <name type="primary">KMP-11</name>
    <name type="synonym">KMP11</name>
</gene>
<organism evidence="6">
    <name type="scientific">Trypanosoma cruzi</name>
    <dbReference type="NCBI Taxonomy" id="5693"/>
    <lineage>
        <taxon>Eukaryota</taxon>
        <taxon>Discoba</taxon>
        <taxon>Euglenozoa</taxon>
        <taxon>Kinetoplastea</taxon>
        <taxon>Metakinetoplastina</taxon>
        <taxon>Trypanosomatida</taxon>
        <taxon>Trypanosomatidae</taxon>
        <taxon>Trypanosoma</taxon>
        <taxon>Schizotrypanum</taxon>
    </lineage>
</organism>